<name>SMP10_NAUMA</name>
<evidence type="ECO:0000269" key="1">
    <source>
    </source>
</evidence>
<evidence type="ECO:0000303" key="2">
    <source>
    </source>
</evidence>
<feature type="chain" id="PRO_0000371491" description="Uncharacterized protein SMPP10">
    <location>
        <begin position="1" status="less than"/>
        <end position="8" status="greater than"/>
    </location>
</feature>
<feature type="unsure residue" description="L -&gt; I" evidence="1">
    <location>
        <position position="2"/>
    </location>
</feature>
<feature type="non-terminal residue" evidence="2">
    <location>
        <position position="1"/>
    </location>
</feature>
<feature type="non-terminal residue" evidence="2">
    <location>
        <position position="8"/>
    </location>
</feature>
<sequence>QLFQPPFR</sequence>
<reference key="1">
    <citation type="journal article" date="2009" name="ChemBioChem">
        <title>Evolution of nacre: biochemistry and 'shellomics' of the shell organic matrix of the cephalopod Nautilus macromphalus.</title>
        <authorList>
            <person name="Marie B."/>
            <person name="Marin F."/>
            <person name="Marie A."/>
            <person name="Bedouet L."/>
            <person name="Dubost L."/>
            <person name="Alcaraz G."/>
            <person name="Milet C."/>
            <person name="Luquet G."/>
        </authorList>
    </citation>
    <scope>PROTEIN SEQUENCE</scope>
    <scope>TISSUE SPECIFICITY</scope>
    <source>
        <tissue>Shell</tissue>
    </source>
</reference>
<accession>P85364</accession>
<keyword id="KW-0903">Direct protein sequencing</keyword>
<organism>
    <name type="scientific">Nautilus macromphalus</name>
    <name type="common">Bellybutton nautilus</name>
    <dbReference type="NCBI Taxonomy" id="34576"/>
    <lineage>
        <taxon>Eukaryota</taxon>
        <taxon>Metazoa</taxon>
        <taxon>Spiralia</taxon>
        <taxon>Lophotrochozoa</taxon>
        <taxon>Mollusca</taxon>
        <taxon>Cephalopoda</taxon>
        <taxon>Nautiloidea</taxon>
        <taxon>Nautilida</taxon>
        <taxon>Nautilidae</taxon>
        <taxon>Nautilus</taxon>
    </lineage>
</organism>
<protein>
    <recommendedName>
        <fullName evidence="2">Uncharacterized protein SMPP10</fullName>
    </recommendedName>
</protein>
<comment type="tissue specificity">
    <text evidence="1">Nacreous layer of shell.</text>
</comment>
<proteinExistence type="evidence at protein level"/>